<evidence type="ECO:0000255" key="1">
    <source>
        <dbReference type="HAMAP-Rule" id="MF_00584"/>
    </source>
</evidence>
<organism>
    <name type="scientific">Saccharolobus islandicus (strain M.16.27)</name>
    <name type="common">Sulfolobus islandicus</name>
    <dbReference type="NCBI Taxonomy" id="427318"/>
    <lineage>
        <taxon>Archaea</taxon>
        <taxon>Thermoproteota</taxon>
        <taxon>Thermoprotei</taxon>
        <taxon>Sulfolobales</taxon>
        <taxon>Sulfolobaceae</taxon>
        <taxon>Saccharolobus</taxon>
    </lineage>
</organism>
<feature type="chain" id="PRO_1000212142" description="Putative HTH-type transcriptional regulatory protein M1627_1334">
    <location>
        <begin position="1"/>
        <end position="310"/>
    </location>
</feature>
<feature type="domain" description="HTH cro/C1-type" evidence="1">
    <location>
        <begin position="125"/>
        <end position="180"/>
    </location>
</feature>
<feature type="DNA-binding region" description="H-T-H motif" evidence="1">
    <location>
        <begin position="136"/>
        <end position="155"/>
    </location>
</feature>
<keyword id="KW-0238">DNA-binding</keyword>
<keyword id="KW-0804">Transcription</keyword>
<keyword id="KW-0805">Transcription regulation</keyword>
<dbReference type="EMBL" id="CP001401">
    <property type="protein sequence ID" value="ACP55217.1"/>
    <property type="molecule type" value="Genomic_DNA"/>
</dbReference>
<dbReference type="RefSeq" id="WP_012711291.1">
    <property type="nucleotide sequence ID" value="NC_012632.1"/>
</dbReference>
<dbReference type="SMR" id="C3N5E2"/>
<dbReference type="KEGG" id="sim:M1627_1334"/>
<dbReference type="HOGENOM" id="CLU_075726_1_0_2"/>
<dbReference type="Proteomes" id="UP000002307">
    <property type="component" value="Chromosome"/>
</dbReference>
<dbReference type="GO" id="GO:0003677">
    <property type="term" value="F:DNA binding"/>
    <property type="evidence" value="ECO:0007669"/>
    <property type="project" value="UniProtKB-KW"/>
</dbReference>
<dbReference type="GO" id="GO:0003700">
    <property type="term" value="F:DNA-binding transcription factor activity"/>
    <property type="evidence" value="ECO:0007669"/>
    <property type="project" value="UniProtKB-UniRule"/>
</dbReference>
<dbReference type="CDD" id="cd00093">
    <property type="entry name" value="HTH_XRE"/>
    <property type="match status" value="1"/>
</dbReference>
<dbReference type="Gene3D" id="1.10.260.40">
    <property type="entry name" value="lambda repressor-like DNA-binding domains"/>
    <property type="match status" value="1"/>
</dbReference>
<dbReference type="HAMAP" id="MF_00584">
    <property type="entry name" value="HTH_type_cro_C1"/>
    <property type="match status" value="1"/>
</dbReference>
<dbReference type="InterPro" id="IPR020886">
    <property type="entry name" value="Arc_TR_HTH"/>
</dbReference>
<dbReference type="InterPro" id="IPR001387">
    <property type="entry name" value="Cro/C1-type_HTH"/>
</dbReference>
<dbReference type="InterPro" id="IPR010982">
    <property type="entry name" value="Lambda_DNA-bd_dom_sf"/>
</dbReference>
<dbReference type="Pfam" id="PF01381">
    <property type="entry name" value="HTH_3"/>
    <property type="match status" value="1"/>
</dbReference>
<dbReference type="SMART" id="SM00530">
    <property type="entry name" value="HTH_XRE"/>
    <property type="match status" value="1"/>
</dbReference>
<dbReference type="SUPFAM" id="SSF47413">
    <property type="entry name" value="lambda repressor-like DNA-binding domains"/>
    <property type="match status" value="1"/>
</dbReference>
<dbReference type="PROSITE" id="PS50943">
    <property type="entry name" value="HTH_CROC1"/>
    <property type="match status" value="1"/>
</dbReference>
<name>Y1334_SACI3</name>
<gene>
    <name type="ordered locus">M1627_1334</name>
</gene>
<accession>C3N5E2</accession>
<protein>
    <recommendedName>
        <fullName evidence="1">Putative HTH-type transcriptional regulatory protein M1627_1334</fullName>
    </recommendedName>
</protein>
<proteinExistence type="inferred from homology"/>
<sequence>MSKKIINEVIDILEDKKYTYTMIEYPEHNRKSVDIVLNSKEPTLIRVSEDKVTKEEISDLKKIAVSTLTASLVVTNEEEEDIVSVKADNVFAVSPEGFKKVINGEKIFLYRTRGGIFIKIRNYILKHKREEMGYSIGDVAKFLGVSRKAIYDYEKGDSDVSLEVAEKLIDLFGDDIIGDVIWDSIKGKKEVIEEDITEFSPESFKSKLIYKLKENGLNILSLKLTAADLIVKDNENNRYLVTIENKDYNKSMKKFYEAKKLASYTKSELLIIIRTSKMLKECEDLGYKTYEENDIHSLIDEIKGSNGRQS</sequence>
<reference key="1">
    <citation type="journal article" date="2009" name="Proc. Natl. Acad. Sci. U.S.A.">
        <title>Biogeography of the Sulfolobus islandicus pan-genome.</title>
        <authorList>
            <person name="Reno M.L."/>
            <person name="Held N.L."/>
            <person name="Fields C.J."/>
            <person name="Burke P.V."/>
            <person name="Whitaker R.J."/>
        </authorList>
    </citation>
    <scope>NUCLEOTIDE SEQUENCE [LARGE SCALE GENOMIC DNA]</scope>
    <source>
        <strain>M.16.27</strain>
    </source>
</reference>